<name>RL33_SALAR</name>
<comment type="similarity">
    <text evidence="1">Belongs to the bacterial ribosomal protein bL33 family.</text>
</comment>
<evidence type="ECO:0000255" key="1">
    <source>
        <dbReference type="HAMAP-Rule" id="MF_00294"/>
    </source>
</evidence>
<evidence type="ECO:0000305" key="2"/>
<feature type="chain" id="PRO_1000078922" description="Large ribosomal subunit protein bL33">
    <location>
        <begin position="1"/>
        <end position="55"/>
    </location>
</feature>
<sequence length="55" mass="6372">MAKGIREKIKLVSSAGTGHFYTTTKNKRTKPEKLELKKFDPVVRQHVIYKEAKIK</sequence>
<organism>
    <name type="scientific">Salmonella arizonae (strain ATCC BAA-731 / CDC346-86 / RSK2980)</name>
    <dbReference type="NCBI Taxonomy" id="41514"/>
    <lineage>
        <taxon>Bacteria</taxon>
        <taxon>Pseudomonadati</taxon>
        <taxon>Pseudomonadota</taxon>
        <taxon>Gammaproteobacteria</taxon>
        <taxon>Enterobacterales</taxon>
        <taxon>Enterobacteriaceae</taxon>
        <taxon>Salmonella</taxon>
    </lineage>
</organism>
<accession>A9MKN8</accession>
<proteinExistence type="inferred from homology"/>
<protein>
    <recommendedName>
        <fullName evidence="1">Large ribosomal subunit protein bL33</fullName>
    </recommendedName>
    <alternativeName>
        <fullName evidence="2">50S ribosomal protein L33</fullName>
    </alternativeName>
</protein>
<dbReference type="EMBL" id="CP000880">
    <property type="protein sequence ID" value="ABX23707.1"/>
    <property type="molecule type" value="Genomic_DNA"/>
</dbReference>
<dbReference type="SMR" id="A9MKN8"/>
<dbReference type="STRING" id="41514.SARI_03913"/>
<dbReference type="KEGG" id="ses:SARI_03913"/>
<dbReference type="HOGENOM" id="CLU_190949_1_1_6"/>
<dbReference type="Proteomes" id="UP000002084">
    <property type="component" value="Chromosome"/>
</dbReference>
<dbReference type="GO" id="GO:0022625">
    <property type="term" value="C:cytosolic large ribosomal subunit"/>
    <property type="evidence" value="ECO:0007669"/>
    <property type="project" value="TreeGrafter"/>
</dbReference>
<dbReference type="GO" id="GO:0003735">
    <property type="term" value="F:structural constituent of ribosome"/>
    <property type="evidence" value="ECO:0007669"/>
    <property type="project" value="InterPro"/>
</dbReference>
<dbReference type="GO" id="GO:0006412">
    <property type="term" value="P:translation"/>
    <property type="evidence" value="ECO:0007669"/>
    <property type="project" value="UniProtKB-UniRule"/>
</dbReference>
<dbReference type="FunFam" id="2.20.28.120:FF:000001">
    <property type="entry name" value="50S ribosomal protein L33"/>
    <property type="match status" value="1"/>
</dbReference>
<dbReference type="Gene3D" id="2.20.28.120">
    <property type="entry name" value="Ribosomal protein L33"/>
    <property type="match status" value="1"/>
</dbReference>
<dbReference type="HAMAP" id="MF_00294">
    <property type="entry name" value="Ribosomal_bL33"/>
    <property type="match status" value="1"/>
</dbReference>
<dbReference type="InterPro" id="IPR001705">
    <property type="entry name" value="Ribosomal_bL33"/>
</dbReference>
<dbReference type="InterPro" id="IPR018264">
    <property type="entry name" value="Ribosomal_bL33_CS"/>
</dbReference>
<dbReference type="InterPro" id="IPR038584">
    <property type="entry name" value="Ribosomal_bL33_sf"/>
</dbReference>
<dbReference type="InterPro" id="IPR011332">
    <property type="entry name" value="Ribosomal_zn-bd"/>
</dbReference>
<dbReference type="NCBIfam" id="NF001860">
    <property type="entry name" value="PRK00595.1"/>
    <property type="match status" value="1"/>
</dbReference>
<dbReference type="NCBIfam" id="TIGR01023">
    <property type="entry name" value="rpmG_bact"/>
    <property type="match status" value="1"/>
</dbReference>
<dbReference type="PANTHER" id="PTHR15238">
    <property type="entry name" value="54S RIBOSOMAL PROTEIN L39, MITOCHONDRIAL"/>
    <property type="match status" value="1"/>
</dbReference>
<dbReference type="PANTHER" id="PTHR15238:SF1">
    <property type="entry name" value="LARGE RIBOSOMAL SUBUNIT PROTEIN BL33M"/>
    <property type="match status" value="1"/>
</dbReference>
<dbReference type="Pfam" id="PF00471">
    <property type="entry name" value="Ribosomal_L33"/>
    <property type="match status" value="1"/>
</dbReference>
<dbReference type="SUPFAM" id="SSF57829">
    <property type="entry name" value="Zn-binding ribosomal proteins"/>
    <property type="match status" value="1"/>
</dbReference>
<dbReference type="PROSITE" id="PS00582">
    <property type="entry name" value="RIBOSOMAL_L33"/>
    <property type="match status" value="1"/>
</dbReference>
<gene>
    <name evidence="1" type="primary">rpmG</name>
    <name type="ordered locus">SARI_03913</name>
</gene>
<reference key="1">
    <citation type="submission" date="2007-11" db="EMBL/GenBank/DDBJ databases">
        <authorList>
            <consortium name="The Salmonella enterica serovar Arizonae Genome Sequencing Project"/>
            <person name="McClelland M."/>
            <person name="Sanderson E.K."/>
            <person name="Porwollik S."/>
            <person name="Spieth J."/>
            <person name="Clifton W.S."/>
            <person name="Fulton R."/>
            <person name="Chunyan W."/>
            <person name="Wollam A."/>
            <person name="Shah N."/>
            <person name="Pepin K."/>
            <person name="Bhonagiri V."/>
            <person name="Nash W."/>
            <person name="Johnson M."/>
            <person name="Thiruvilangam P."/>
            <person name="Wilson R."/>
        </authorList>
    </citation>
    <scope>NUCLEOTIDE SEQUENCE [LARGE SCALE GENOMIC DNA]</scope>
    <source>
        <strain>ATCC BAA-731 / CDC346-86 / RSK2980</strain>
    </source>
</reference>
<keyword id="KW-1185">Reference proteome</keyword>
<keyword id="KW-0687">Ribonucleoprotein</keyword>
<keyword id="KW-0689">Ribosomal protein</keyword>